<name>Y1806_AQUAE</name>
<comment type="subcellular location">
    <subcellularLocation>
        <location evidence="2">Cell membrane</location>
        <topology evidence="2">Lipid-anchor</topology>
    </subcellularLocation>
</comment>
<proteinExistence type="inferred from homology"/>
<accession>O67672</accession>
<reference key="1">
    <citation type="journal article" date="1998" name="Nature">
        <title>The complete genome of the hyperthermophilic bacterium Aquifex aeolicus.</title>
        <authorList>
            <person name="Deckert G."/>
            <person name="Warren P.V."/>
            <person name="Gaasterland T."/>
            <person name="Young W.G."/>
            <person name="Lenox A.L."/>
            <person name="Graham D.E."/>
            <person name="Overbeek R."/>
            <person name="Snead M.A."/>
            <person name="Keller M."/>
            <person name="Aujay M."/>
            <person name="Huber R."/>
            <person name="Feldman R.A."/>
            <person name="Short J.M."/>
            <person name="Olsen G.J."/>
            <person name="Swanson R.V."/>
        </authorList>
    </citation>
    <scope>NUCLEOTIDE SEQUENCE [LARGE SCALE GENOMIC DNA]</scope>
    <source>
        <strain>VF5</strain>
    </source>
</reference>
<organism>
    <name type="scientific">Aquifex aeolicus (strain VF5)</name>
    <dbReference type="NCBI Taxonomy" id="224324"/>
    <lineage>
        <taxon>Bacteria</taxon>
        <taxon>Pseudomonadati</taxon>
        <taxon>Aquificota</taxon>
        <taxon>Aquificia</taxon>
        <taxon>Aquificales</taxon>
        <taxon>Aquificaceae</taxon>
        <taxon>Aquifex</taxon>
    </lineage>
</organism>
<sequence>MKGKILFALFLSAGVIACQPASQAAKQQEVKVAKAETKTKKKESKAEKFRKALAAQDKWQKACSNPVQIAPEGVDVAQFIKEMKATIKYPEDGNVVGDWRKGESLALLKKEYKALYGKKGGSKKGNCYACHCGDPRIIACGNIGPSLRGYGNKGIDPKMTYERIYNPWSQVPCSTMFRFGYHGLLTPEEIADIVAYLHDPESPINK</sequence>
<keyword id="KW-1003">Cell membrane</keyword>
<keyword id="KW-0175">Coiled coil</keyword>
<keyword id="KW-0249">Electron transport</keyword>
<keyword id="KW-0349">Heme</keyword>
<keyword id="KW-0408">Iron</keyword>
<keyword id="KW-0449">Lipoprotein</keyword>
<keyword id="KW-0472">Membrane</keyword>
<keyword id="KW-0479">Metal-binding</keyword>
<keyword id="KW-0564">Palmitate</keyword>
<keyword id="KW-1185">Reference proteome</keyword>
<keyword id="KW-0732">Signal</keyword>
<keyword id="KW-0813">Transport</keyword>
<dbReference type="EMBL" id="AE000657">
    <property type="protein sequence ID" value="AAC07642.1"/>
    <property type="molecule type" value="Genomic_DNA"/>
</dbReference>
<dbReference type="PIR" id="F70455">
    <property type="entry name" value="F70455"/>
</dbReference>
<dbReference type="RefSeq" id="NP_214238.1">
    <property type="nucleotide sequence ID" value="NC_000918.1"/>
</dbReference>
<dbReference type="RefSeq" id="WP_010881175.1">
    <property type="nucleotide sequence ID" value="NC_000918.1"/>
</dbReference>
<dbReference type="SMR" id="O67672"/>
<dbReference type="STRING" id="224324.aq_1806"/>
<dbReference type="EnsemblBacteria" id="AAC07642">
    <property type="protein sequence ID" value="AAC07642"/>
    <property type="gene ID" value="aq_1806"/>
</dbReference>
<dbReference type="KEGG" id="aae:aq_1806"/>
<dbReference type="eggNOG" id="COG2010">
    <property type="taxonomic scope" value="Bacteria"/>
</dbReference>
<dbReference type="HOGENOM" id="CLU_098286_0_0_0"/>
<dbReference type="InParanoid" id="O67672"/>
<dbReference type="OrthoDB" id="8562939at2"/>
<dbReference type="Proteomes" id="UP000000798">
    <property type="component" value="Chromosome"/>
</dbReference>
<dbReference type="GO" id="GO:0005886">
    <property type="term" value="C:plasma membrane"/>
    <property type="evidence" value="ECO:0007669"/>
    <property type="project" value="UniProtKB-SubCell"/>
</dbReference>
<dbReference type="GO" id="GO:0009055">
    <property type="term" value="F:electron transfer activity"/>
    <property type="evidence" value="ECO:0007669"/>
    <property type="project" value="InterPro"/>
</dbReference>
<dbReference type="GO" id="GO:0020037">
    <property type="term" value="F:heme binding"/>
    <property type="evidence" value="ECO:0007669"/>
    <property type="project" value="InterPro"/>
</dbReference>
<dbReference type="GO" id="GO:0046872">
    <property type="term" value="F:metal ion binding"/>
    <property type="evidence" value="ECO:0007669"/>
    <property type="project" value="UniProtKB-KW"/>
</dbReference>
<dbReference type="Gene3D" id="1.10.760.10">
    <property type="entry name" value="Cytochrome c-like domain"/>
    <property type="match status" value="1"/>
</dbReference>
<dbReference type="InterPro" id="IPR009056">
    <property type="entry name" value="Cyt_c-like_dom"/>
</dbReference>
<dbReference type="InterPro" id="IPR036909">
    <property type="entry name" value="Cyt_c-like_dom_sf"/>
</dbReference>
<dbReference type="InterPro" id="IPR030999">
    <property type="entry name" value="Thiosulf_SoxX"/>
</dbReference>
<dbReference type="InterPro" id="IPR016823">
    <property type="entry name" value="Thiosulf_SoxX_II"/>
</dbReference>
<dbReference type="NCBIfam" id="TIGR04485">
    <property type="entry name" value="thiosulf_SoxX"/>
    <property type="match status" value="1"/>
</dbReference>
<dbReference type="PIRSF" id="PIRSF024608">
    <property type="entry name" value="UCP024608"/>
    <property type="match status" value="1"/>
</dbReference>
<dbReference type="SUPFAM" id="SSF46626">
    <property type="entry name" value="Cytochrome c"/>
    <property type="match status" value="1"/>
</dbReference>
<dbReference type="PROSITE" id="PS51007">
    <property type="entry name" value="CYTC"/>
    <property type="match status" value="1"/>
</dbReference>
<dbReference type="PROSITE" id="PS51257">
    <property type="entry name" value="PROKAR_LIPOPROTEIN"/>
    <property type="match status" value="1"/>
</dbReference>
<evidence type="ECO:0000255" key="1"/>
<evidence type="ECO:0000255" key="2">
    <source>
        <dbReference type="PROSITE-ProRule" id="PRU00303"/>
    </source>
</evidence>
<evidence type="ECO:0000255" key="3">
    <source>
        <dbReference type="PROSITE-ProRule" id="PRU00433"/>
    </source>
</evidence>
<protein>
    <recommendedName>
        <fullName>Uncharacterized lipoprotein aq_1806</fullName>
    </recommendedName>
</protein>
<gene>
    <name type="ordered locus">aq_1806</name>
</gene>
<feature type="signal peptide" evidence="2">
    <location>
        <begin position="1"/>
        <end position="17"/>
    </location>
</feature>
<feature type="chain" id="PRO_0000006606" description="Uncharacterized lipoprotein aq_1806">
    <location>
        <begin position="18"/>
        <end position="206"/>
    </location>
</feature>
<feature type="domain" description="Cytochrome c" evidence="3">
    <location>
        <begin position="97"/>
        <end position="201"/>
    </location>
</feature>
<feature type="coiled-coil region" evidence="1">
    <location>
        <begin position="21"/>
        <end position="58"/>
    </location>
</feature>
<feature type="binding site" description="covalent" evidence="3">
    <location>
        <position position="127"/>
    </location>
    <ligand>
        <name>heme c</name>
        <dbReference type="ChEBI" id="CHEBI:61717"/>
    </ligand>
</feature>
<feature type="binding site" description="covalent" evidence="3">
    <location>
        <position position="130"/>
    </location>
    <ligand>
        <name>heme c</name>
        <dbReference type="ChEBI" id="CHEBI:61717"/>
    </ligand>
</feature>
<feature type="binding site" description="axial binding residue" evidence="3">
    <location>
        <position position="131"/>
    </location>
    <ligand>
        <name>heme c</name>
        <dbReference type="ChEBI" id="CHEBI:61717"/>
    </ligand>
    <ligandPart>
        <name>Fe</name>
        <dbReference type="ChEBI" id="CHEBI:18248"/>
    </ligandPart>
</feature>
<feature type="lipid moiety-binding region" description="N-palmitoyl cysteine" evidence="2">
    <location>
        <position position="18"/>
    </location>
</feature>
<feature type="lipid moiety-binding region" description="S-diacylglycerol cysteine" evidence="2">
    <location>
        <position position="18"/>
    </location>
</feature>